<evidence type="ECO:0000255" key="1">
    <source>
        <dbReference type="HAMAP-Rule" id="MF_00052"/>
    </source>
</evidence>
<evidence type="ECO:0000255" key="2">
    <source>
        <dbReference type="PROSITE-ProRule" id="PRU01319"/>
    </source>
</evidence>
<dbReference type="EC" id="3.1.26.4" evidence="1"/>
<dbReference type="EMBL" id="CP000783">
    <property type="protein sequence ID" value="ABU78381.1"/>
    <property type="molecule type" value="Genomic_DNA"/>
</dbReference>
<dbReference type="RefSeq" id="WP_007896690.1">
    <property type="nucleotide sequence ID" value="NC_009778.1"/>
</dbReference>
<dbReference type="SMR" id="A7MI15"/>
<dbReference type="GeneID" id="56731850"/>
<dbReference type="KEGG" id="esa:ESA_03158"/>
<dbReference type="HOGENOM" id="CLU_036532_3_2_6"/>
<dbReference type="Proteomes" id="UP000000260">
    <property type="component" value="Chromosome"/>
</dbReference>
<dbReference type="GO" id="GO:0005737">
    <property type="term" value="C:cytoplasm"/>
    <property type="evidence" value="ECO:0007669"/>
    <property type="project" value="UniProtKB-SubCell"/>
</dbReference>
<dbReference type="GO" id="GO:0032299">
    <property type="term" value="C:ribonuclease H2 complex"/>
    <property type="evidence" value="ECO:0007669"/>
    <property type="project" value="TreeGrafter"/>
</dbReference>
<dbReference type="GO" id="GO:0030145">
    <property type="term" value="F:manganese ion binding"/>
    <property type="evidence" value="ECO:0007669"/>
    <property type="project" value="UniProtKB-UniRule"/>
</dbReference>
<dbReference type="GO" id="GO:0003723">
    <property type="term" value="F:RNA binding"/>
    <property type="evidence" value="ECO:0007669"/>
    <property type="project" value="InterPro"/>
</dbReference>
<dbReference type="GO" id="GO:0004523">
    <property type="term" value="F:RNA-DNA hybrid ribonuclease activity"/>
    <property type="evidence" value="ECO:0007669"/>
    <property type="project" value="UniProtKB-UniRule"/>
</dbReference>
<dbReference type="GO" id="GO:0043137">
    <property type="term" value="P:DNA replication, removal of RNA primer"/>
    <property type="evidence" value="ECO:0007669"/>
    <property type="project" value="TreeGrafter"/>
</dbReference>
<dbReference type="GO" id="GO:0006298">
    <property type="term" value="P:mismatch repair"/>
    <property type="evidence" value="ECO:0007669"/>
    <property type="project" value="TreeGrafter"/>
</dbReference>
<dbReference type="CDD" id="cd07182">
    <property type="entry name" value="RNase_HII_bacteria_HII_like"/>
    <property type="match status" value="1"/>
</dbReference>
<dbReference type="FunFam" id="3.30.420.10:FF:000006">
    <property type="entry name" value="Ribonuclease HII"/>
    <property type="match status" value="1"/>
</dbReference>
<dbReference type="Gene3D" id="3.30.420.10">
    <property type="entry name" value="Ribonuclease H-like superfamily/Ribonuclease H"/>
    <property type="match status" value="1"/>
</dbReference>
<dbReference type="HAMAP" id="MF_00052_B">
    <property type="entry name" value="RNase_HII_B"/>
    <property type="match status" value="1"/>
</dbReference>
<dbReference type="InterPro" id="IPR022898">
    <property type="entry name" value="RNase_HII"/>
</dbReference>
<dbReference type="InterPro" id="IPR001352">
    <property type="entry name" value="RNase_HII/HIII"/>
</dbReference>
<dbReference type="InterPro" id="IPR024567">
    <property type="entry name" value="RNase_HII/HIII_dom"/>
</dbReference>
<dbReference type="InterPro" id="IPR012337">
    <property type="entry name" value="RNaseH-like_sf"/>
</dbReference>
<dbReference type="InterPro" id="IPR036397">
    <property type="entry name" value="RNaseH_sf"/>
</dbReference>
<dbReference type="NCBIfam" id="NF000594">
    <property type="entry name" value="PRK00015.1-1"/>
    <property type="match status" value="1"/>
</dbReference>
<dbReference type="NCBIfam" id="NF000595">
    <property type="entry name" value="PRK00015.1-3"/>
    <property type="match status" value="1"/>
</dbReference>
<dbReference type="NCBIfam" id="NF000596">
    <property type="entry name" value="PRK00015.1-4"/>
    <property type="match status" value="1"/>
</dbReference>
<dbReference type="PANTHER" id="PTHR10954">
    <property type="entry name" value="RIBONUCLEASE H2 SUBUNIT A"/>
    <property type="match status" value="1"/>
</dbReference>
<dbReference type="PANTHER" id="PTHR10954:SF18">
    <property type="entry name" value="RIBONUCLEASE HII"/>
    <property type="match status" value="1"/>
</dbReference>
<dbReference type="Pfam" id="PF01351">
    <property type="entry name" value="RNase_HII"/>
    <property type="match status" value="1"/>
</dbReference>
<dbReference type="SUPFAM" id="SSF53098">
    <property type="entry name" value="Ribonuclease H-like"/>
    <property type="match status" value="1"/>
</dbReference>
<dbReference type="PROSITE" id="PS51975">
    <property type="entry name" value="RNASE_H_2"/>
    <property type="match status" value="1"/>
</dbReference>
<proteinExistence type="inferred from homology"/>
<reference key="1">
    <citation type="journal article" date="2010" name="PLoS ONE">
        <title>Genome sequence of Cronobacter sakazakii BAA-894 and comparative genomic hybridization analysis with other Cronobacter species.</title>
        <authorList>
            <person name="Kucerova E."/>
            <person name="Clifton S.W."/>
            <person name="Xia X.Q."/>
            <person name="Long F."/>
            <person name="Porwollik S."/>
            <person name="Fulton L."/>
            <person name="Fronick C."/>
            <person name="Minx P."/>
            <person name="Kyung K."/>
            <person name="Warren W."/>
            <person name="Fulton R."/>
            <person name="Feng D."/>
            <person name="Wollam A."/>
            <person name="Shah N."/>
            <person name="Bhonagiri V."/>
            <person name="Nash W.E."/>
            <person name="Hallsworth-Pepin K."/>
            <person name="Wilson R.K."/>
            <person name="McClelland M."/>
            <person name="Forsythe S.J."/>
        </authorList>
    </citation>
    <scope>NUCLEOTIDE SEQUENCE [LARGE SCALE GENOMIC DNA]</scope>
    <source>
        <strain>ATCC BAA-894</strain>
    </source>
</reference>
<name>RNH2_CROS8</name>
<organism>
    <name type="scientific">Cronobacter sakazakii (strain ATCC BAA-894)</name>
    <name type="common">Enterobacter sakazakii</name>
    <dbReference type="NCBI Taxonomy" id="290339"/>
    <lineage>
        <taxon>Bacteria</taxon>
        <taxon>Pseudomonadati</taxon>
        <taxon>Pseudomonadota</taxon>
        <taxon>Gammaproteobacteria</taxon>
        <taxon>Enterobacterales</taxon>
        <taxon>Enterobacteriaceae</taxon>
        <taxon>Cronobacter</taxon>
    </lineage>
</organism>
<comment type="function">
    <text evidence="1">Endonuclease that specifically degrades the RNA of RNA-DNA hybrids.</text>
</comment>
<comment type="catalytic activity">
    <reaction evidence="1">
        <text>Endonucleolytic cleavage to 5'-phosphomonoester.</text>
        <dbReference type="EC" id="3.1.26.4"/>
    </reaction>
</comment>
<comment type="cofactor">
    <cofactor evidence="1">
        <name>Mn(2+)</name>
        <dbReference type="ChEBI" id="CHEBI:29035"/>
    </cofactor>
    <cofactor evidence="1">
        <name>Mg(2+)</name>
        <dbReference type="ChEBI" id="CHEBI:18420"/>
    </cofactor>
    <text evidence="1">Manganese or magnesium. Binds 1 divalent metal ion per monomer in the absence of substrate. May bind a second metal ion after substrate binding.</text>
</comment>
<comment type="subcellular location">
    <subcellularLocation>
        <location evidence="1">Cytoplasm</location>
    </subcellularLocation>
</comment>
<comment type="similarity">
    <text evidence="1">Belongs to the RNase HII family.</text>
</comment>
<gene>
    <name evidence="1" type="primary">rnhB</name>
    <name type="ordered locus">ESA_03158</name>
</gene>
<feature type="chain" id="PRO_1000031140" description="Ribonuclease HII">
    <location>
        <begin position="1"/>
        <end position="198"/>
    </location>
</feature>
<feature type="domain" description="RNase H type-2" evidence="2">
    <location>
        <begin position="10"/>
        <end position="198"/>
    </location>
</feature>
<feature type="binding site" evidence="1">
    <location>
        <position position="16"/>
    </location>
    <ligand>
        <name>a divalent metal cation</name>
        <dbReference type="ChEBI" id="CHEBI:60240"/>
    </ligand>
</feature>
<feature type="binding site" evidence="1">
    <location>
        <position position="17"/>
    </location>
    <ligand>
        <name>a divalent metal cation</name>
        <dbReference type="ChEBI" id="CHEBI:60240"/>
    </ligand>
</feature>
<feature type="binding site" evidence="1">
    <location>
        <position position="108"/>
    </location>
    <ligand>
        <name>a divalent metal cation</name>
        <dbReference type="ChEBI" id="CHEBI:60240"/>
    </ligand>
</feature>
<protein>
    <recommendedName>
        <fullName evidence="1">Ribonuclease HII</fullName>
        <shortName evidence="1">RNase HII</shortName>
        <ecNumber evidence="1">3.1.26.4</ecNumber>
    </recommendedName>
</protein>
<keyword id="KW-0963">Cytoplasm</keyword>
<keyword id="KW-0255">Endonuclease</keyword>
<keyword id="KW-0378">Hydrolase</keyword>
<keyword id="KW-0464">Manganese</keyword>
<keyword id="KW-0479">Metal-binding</keyword>
<keyword id="KW-0540">Nuclease</keyword>
<keyword id="KW-1185">Reference proteome</keyword>
<accession>A7MI15</accession>
<sequence>MMEFIYPHTHLVAGVDEVGRGPLVGAVVTAAVILDPLKPIVGLADSKKLSEKRRLALFDEIKEKAIAWSLGRAEPHEIDELNILHATMLAMQRAVAGLAVTPEYVLVDGNRCPALPMPSMAVVKGDSRVAEISAASILAKVTRDAEMAELDLTFPQYGFAQHKGYPTAFHLERLAEHGATAHHRRSFAPVRRALGIAS</sequence>